<name>ZIPA_SHIFL</name>
<dbReference type="EMBL" id="AE005674">
    <property type="protein sequence ID" value="AAN43974.2"/>
    <property type="molecule type" value="Genomic_DNA"/>
</dbReference>
<dbReference type="EMBL" id="AE014073">
    <property type="protein sequence ID" value="AAP17787.1"/>
    <property type="molecule type" value="Genomic_DNA"/>
</dbReference>
<dbReference type="RefSeq" id="NP_708267.2">
    <property type="nucleotide sequence ID" value="NC_004337.2"/>
</dbReference>
<dbReference type="SMR" id="Q83QN9"/>
<dbReference type="STRING" id="198214.SF2467"/>
<dbReference type="DrugBank" id="DB02191">
    <property type="generic name" value="(7as,12ar,12bs)-1,2,3,4,7a,12,12a,12b-Octahydroindolo[2,3-a]Quinolizin-7(6h)-One"/>
</dbReference>
<dbReference type="DrugBank" id="DB03916">
    <property type="generic name" value="4-{2-[4-(2-Aminoethyl)Piperazin-1-Yl]Pyridin-4-Yl}-N-(3-Chloro-4-Methylphenyl)Pyrimidin-2-Amine"/>
</dbReference>
<dbReference type="DrugBank" id="DB04154">
    <property type="generic name" value="N-Methyl-N-[3-(6-Phenyl[1,2,4]Triazolo[4,3-B]Pyridazin-3-Yl)Phenyl]Acetamide"/>
</dbReference>
<dbReference type="DrugBank" id="DB01967">
    <property type="generic name" value="N-{3-[(7ar,12as,12bs)-7-Oxo-1,3,4,6,7,7a,12a,12b-Octahydroindolo[2,3-a]Quinolizin-12(2h)-Yl]Propyl}Propane-2-Sulfonamide"/>
</dbReference>
<dbReference type="PaxDb" id="198214-SF2467"/>
<dbReference type="GeneID" id="1025370"/>
<dbReference type="KEGG" id="sfl:SF2467"/>
<dbReference type="KEGG" id="sfx:S2613"/>
<dbReference type="PATRIC" id="fig|198214.7.peg.2948"/>
<dbReference type="HOGENOM" id="CLU_030174_1_0_6"/>
<dbReference type="Proteomes" id="UP000001006">
    <property type="component" value="Chromosome"/>
</dbReference>
<dbReference type="Proteomes" id="UP000002673">
    <property type="component" value="Chromosome"/>
</dbReference>
<dbReference type="GO" id="GO:0032153">
    <property type="term" value="C:cell division site"/>
    <property type="evidence" value="ECO:0007669"/>
    <property type="project" value="UniProtKB-UniRule"/>
</dbReference>
<dbReference type="GO" id="GO:0005886">
    <property type="term" value="C:plasma membrane"/>
    <property type="evidence" value="ECO:0007669"/>
    <property type="project" value="UniProtKB-SubCell"/>
</dbReference>
<dbReference type="GO" id="GO:0000917">
    <property type="term" value="P:division septum assembly"/>
    <property type="evidence" value="ECO:0007669"/>
    <property type="project" value="TreeGrafter"/>
</dbReference>
<dbReference type="GO" id="GO:0043093">
    <property type="term" value="P:FtsZ-dependent cytokinesis"/>
    <property type="evidence" value="ECO:0007669"/>
    <property type="project" value="UniProtKB-UniRule"/>
</dbReference>
<dbReference type="CDD" id="cd00231">
    <property type="entry name" value="ZipA"/>
    <property type="match status" value="1"/>
</dbReference>
<dbReference type="FunFam" id="3.30.1400.10:FF:000001">
    <property type="entry name" value="Cell division protein ZipA"/>
    <property type="match status" value="1"/>
</dbReference>
<dbReference type="Gene3D" id="3.30.1400.10">
    <property type="entry name" value="ZipA, C-terminal FtsZ-binding domain"/>
    <property type="match status" value="1"/>
</dbReference>
<dbReference type="HAMAP" id="MF_00509">
    <property type="entry name" value="ZipA"/>
    <property type="match status" value="1"/>
</dbReference>
<dbReference type="InterPro" id="IPR011919">
    <property type="entry name" value="Cell_div_ZipA"/>
</dbReference>
<dbReference type="InterPro" id="IPR007449">
    <property type="entry name" value="ZipA_FtsZ-bd_C"/>
</dbReference>
<dbReference type="InterPro" id="IPR036765">
    <property type="entry name" value="ZipA_FtsZ-bd_C_sf"/>
</dbReference>
<dbReference type="NCBIfam" id="TIGR02205">
    <property type="entry name" value="septum_zipA"/>
    <property type="match status" value="1"/>
</dbReference>
<dbReference type="PANTHER" id="PTHR38685">
    <property type="entry name" value="CELL DIVISION PROTEIN ZIPA"/>
    <property type="match status" value="1"/>
</dbReference>
<dbReference type="PANTHER" id="PTHR38685:SF1">
    <property type="entry name" value="CELL DIVISION PROTEIN ZIPA"/>
    <property type="match status" value="1"/>
</dbReference>
<dbReference type="Pfam" id="PF04354">
    <property type="entry name" value="ZipA_C"/>
    <property type="match status" value="1"/>
</dbReference>
<dbReference type="SMART" id="SM00771">
    <property type="entry name" value="ZipA_C"/>
    <property type="match status" value="1"/>
</dbReference>
<dbReference type="SUPFAM" id="SSF64383">
    <property type="entry name" value="Cell-division protein ZipA, C-terminal domain"/>
    <property type="match status" value="1"/>
</dbReference>
<feature type="chain" id="PRO_0000214537" description="Cell division protein ZipA">
    <location>
        <begin position="1"/>
        <end position="327"/>
    </location>
</feature>
<feature type="topological domain" description="Periplasmic" evidence="1">
    <location>
        <begin position="1"/>
        <end position="5"/>
    </location>
</feature>
<feature type="transmembrane region" description="Helical" evidence="1">
    <location>
        <begin position="6"/>
        <end position="26"/>
    </location>
</feature>
<feature type="topological domain" description="Cytoplasmic" evidence="1">
    <location>
        <begin position="27"/>
        <end position="327"/>
    </location>
</feature>
<feature type="region of interest" description="Disordered" evidence="2">
    <location>
        <begin position="41"/>
        <end position="185"/>
    </location>
</feature>
<feature type="compositionally biased region" description="Acidic residues" evidence="2">
    <location>
        <begin position="50"/>
        <end position="62"/>
    </location>
</feature>
<feature type="compositionally biased region" description="Low complexity" evidence="2">
    <location>
        <begin position="98"/>
        <end position="114"/>
    </location>
</feature>
<feature type="compositionally biased region" description="Low complexity" evidence="2">
    <location>
        <begin position="122"/>
        <end position="170"/>
    </location>
</feature>
<reference key="1">
    <citation type="journal article" date="2002" name="Nucleic Acids Res.">
        <title>Genome sequence of Shigella flexneri 2a: insights into pathogenicity through comparison with genomes of Escherichia coli K12 and O157.</title>
        <authorList>
            <person name="Jin Q."/>
            <person name="Yuan Z."/>
            <person name="Xu J."/>
            <person name="Wang Y."/>
            <person name="Shen Y."/>
            <person name="Lu W."/>
            <person name="Wang J."/>
            <person name="Liu H."/>
            <person name="Yang J."/>
            <person name="Yang F."/>
            <person name="Zhang X."/>
            <person name="Zhang J."/>
            <person name="Yang G."/>
            <person name="Wu H."/>
            <person name="Qu D."/>
            <person name="Dong J."/>
            <person name="Sun L."/>
            <person name="Xue Y."/>
            <person name="Zhao A."/>
            <person name="Gao Y."/>
            <person name="Zhu J."/>
            <person name="Kan B."/>
            <person name="Ding K."/>
            <person name="Chen S."/>
            <person name="Cheng H."/>
            <person name="Yao Z."/>
            <person name="He B."/>
            <person name="Chen R."/>
            <person name="Ma D."/>
            <person name="Qiang B."/>
            <person name="Wen Y."/>
            <person name="Hou Y."/>
            <person name="Yu J."/>
        </authorList>
    </citation>
    <scope>NUCLEOTIDE SEQUENCE [LARGE SCALE GENOMIC DNA]</scope>
    <source>
        <strain>301 / Serotype 2a</strain>
    </source>
</reference>
<reference key="2">
    <citation type="journal article" date="2003" name="Infect. Immun.">
        <title>Complete genome sequence and comparative genomics of Shigella flexneri serotype 2a strain 2457T.</title>
        <authorList>
            <person name="Wei J."/>
            <person name="Goldberg M.B."/>
            <person name="Burland V."/>
            <person name="Venkatesan M.M."/>
            <person name="Deng W."/>
            <person name="Fournier G."/>
            <person name="Mayhew G.F."/>
            <person name="Plunkett G. III"/>
            <person name="Rose D.J."/>
            <person name="Darling A."/>
            <person name="Mau B."/>
            <person name="Perna N.T."/>
            <person name="Payne S.M."/>
            <person name="Runyen-Janecky L.J."/>
            <person name="Zhou S."/>
            <person name="Schwartz D.C."/>
            <person name="Blattner F.R."/>
        </authorList>
    </citation>
    <scope>NUCLEOTIDE SEQUENCE [LARGE SCALE GENOMIC DNA]</scope>
    <source>
        <strain>ATCC 700930 / 2457T / Serotype 2a</strain>
    </source>
</reference>
<evidence type="ECO:0000255" key="1">
    <source>
        <dbReference type="HAMAP-Rule" id="MF_00509"/>
    </source>
</evidence>
<evidence type="ECO:0000256" key="2">
    <source>
        <dbReference type="SAM" id="MobiDB-lite"/>
    </source>
</evidence>
<gene>
    <name evidence="1" type="primary">zipA</name>
    <name type="ordered locus">SF2467</name>
    <name type="ordered locus">S2613</name>
</gene>
<proteinExistence type="inferred from homology"/>
<organism>
    <name type="scientific">Shigella flexneri</name>
    <dbReference type="NCBI Taxonomy" id="623"/>
    <lineage>
        <taxon>Bacteria</taxon>
        <taxon>Pseudomonadati</taxon>
        <taxon>Pseudomonadota</taxon>
        <taxon>Gammaproteobacteria</taxon>
        <taxon>Enterobacterales</taxon>
        <taxon>Enterobacteriaceae</taxon>
        <taxon>Shigella</taxon>
    </lineage>
</organism>
<keyword id="KW-0131">Cell cycle</keyword>
<keyword id="KW-0132">Cell division</keyword>
<keyword id="KW-0997">Cell inner membrane</keyword>
<keyword id="KW-1003">Cell membrane</keyword>
<keyword id="KW-0472">Membrane</keyword>
<keyword id="KW-1185">Reference proteome</keyword>
<keyword id="KW-0812">Transmembrane</keyword>
<keyword id="KW-1133">Transmembrane helix</keyword>
<protein>
    <recommendedName>
        <fullName evidence="1">Cell division protein ZipA</fullName>
    </recommendedName>
</protein>
<sequence>MQDLRLILIIVGAIAIIALLVHGFWTSRKERSSMFRDRPLKRMKSKRDDDSYDEDVEDDEGVGEVRVHRVNHAPANAQEHEAARPSPQHQYLPPYASAQPRQPVQQPPEAQVPPQHAPRPAQPVQQPAYQPQPEQPLQQPVSPQVAPAPQPVHSAPQPAQQAFQPAEPVAAPQPEPVAEPAPVMDKPKRKEAVIIMNVAAHHGSELNGELLLNSIQQAGFIFGDMNIYHRHLSPDGSGPALFSLANMVKPGTFDPEMKDFTTPGVTIFMQVPSYGDELQNFKLMLQSAQHIADEVGGVVLDDQRRMMTPQKLREYQDIIREVKDANA</sequence>
<accession>Q83QN9</accession>
<accession>Q7UC33</accession>
<comment type="function">
    <text evidence="1">Essential cell division protein that stabilizes the FtsZ protofilaments by cross-linking them and that serves as a cytoplasmic membrane anchor for the Z ring. Also required for the recruitment to the septal ring of downstream cell division proteins.</text>
</comment>
<comment type="subunit">
    <text evidence="1">Interacts with FtsZ via their C-terminal domains.</text>
</comment>
<comment type="subcellular location">
    <subcellularLocation>
        <location evidence="1">Cell inner membrane</location>
        <topology evidence="1">Single-pass type I membrane protein</topology>
    </subcellularLocation>
    <text evidence="1">Localizes to the Z ring in an FtsZ-dependent manner.</text>
</comment>
<comment type="similarity">
    <text evidence="1">Belongs to the ZipA family.</text>
</comment>